<name>SYGB_BRADU</name>
<sequence length="699" mass="76434">MPDLLLELFSEEIPARMQAKAADDLRRMVTDKLVAEGLVYEGAKAFATPRRLALTVHGIPARQPDLKTERRGPKMGAPDAAVQGFLKATGLKSLDEAKIQRDPKGDFYIALIEKPGRDAIDVLAEILPVIIRTFPWPKSMRWGARSGKPGSLNWVRPLHAITATFGLETEEPDVVKFAVDGIEAGQTTYGHRFLAPAAINVRRFEDYEAKLLDAKVVLDPERRKDAILTDAKQLAFAQGFDLVEDQNLLDEVAGLVEWPVVLMGSFEEEFLATPAEVIRATIRNNQKCFVVSDAKTGKLANKFILVANIEATDGGKTIIAGNERVIRARLSDAKFFYETDLKTKLEDRLPKFEQIVFHEELGTQAARITRIERLAAEIAPLVGADVAKTARAAHLAKADLLTEVVGEFPEVQGLMGKYYALAQGEDASVAAACEEHYKPQGPADRVPTDPVSVAVALADKLDTLVGFWAIDEKPTGSKDPYALRRAALGVIRLIAENTLRLSLMKVAASALAGLSVKPADVQKLPGDLLTFFADRLKVQLREQGARHDLVDAVFALGGQDDLLMIVRRVDALGKFLESDDGKNLLAGTKRASNILSIEEKKDKRTFDGAPDAALYSLGEEKALAKAISEVQAEASASVAKEDFAAAMSAMAKLRPPVDAFFDKVRVNDDDPKVRENRLKLLNEIRSATRAVADFSKIQD</sequence>
<keyword id="KW-0030">Aminoacyl-tRNA synthetase</keyword>
<keyword id="KW-0067">ATP-binding</keyword>
<keyword id="KW-0963">Cytoplasm</keyword>
<keyword id="KW-0436">Ligase</keyword>
<keyword id="KW-0547">Nucleotide-binding</keyword>
<keyword id="KW-0648">Protein biosynthesis</keyword>
<keyword id="KW-1185">Reference proteome</keyword>
<protein>
    <recommendedName>
        <fullName evidence="1">Glycine--tRNA ligase beta subunit</fullName>
        <ecNumber evidence="1">6.1.1.14</ecNumber>
    </recommendedName>
    <alternativeName>
        <fullName evidence="1">Glycyl-tRNA synthetase beta subunit</fullName>
        <shortName evidence="1">GlyRS</shortName>
    </alternativeName>
</protein>
<organism>
    <name type="scientific">Bradyrhizobium diazoefficiens (strain JCM 10833 / BCRC 13528 / IAM 13628 / NBRC 14792 / USDA 110)</name>
    <dbReference type="NCBI Taxonomy" id="224911"/>
    <lineage>
        <taxon>Bacteria</taxon>
        <taxon>Pseudomonadati</taxon>
        <taxon>Pseudomonadota</taxon>
        <taxon>Alphaproteobacteria</taxon>
        <taxon>Hyphomicrobiales</taxon>
        <taxon>Nitrobacteraceae</taxon>
        <taxon>Bradyrhizobium</taxon>
    </lineage>
</organism>
<feature type="chain" id="PRO_1000101266" description="Glycine--tRNA ligase beta subunit">
    <location>
        <begin position="1"/>
        <end position="699"/>
    </location>
</feature>
<dbReference type="EC" id="6.1.1.14" evidence="1"/>
<dbReference type="EMBL" id="BA000040">
    <property type="protein sequence ID" value="BAC47801.1"/>
    <property type="molecule type" value="Genomic_DNA"/>
</dbReference>
<dbReference type="RefSeq" id="NP_769176.1">
    <property type="nucleotide sequence ID" value="NC_004463.1"/>
</dbReference>
<dbReference type="RefSeq" id="WP_011085323.1">
    <property type="nucleotide sequence ID" value="NC_004463.1"/>
</dbReference>
<dbReference type="SMR" id="Q89S69"/>
<dbReference type="FunCoup" id="Q89S69">
    <property type="interactions" value="627"/>
</dbReference>
<dbReference type="STRING" id="224911.AAV28_09620"/>
<dbReference type="EnsemblBacteria" id="BAC47801">
    <property type="protein sequence ID" value="BAC47801"/>
    <property type="gene ID" value="BAC47801"/>
</dbReference>
<dbReference type="GeneID" id="46489578"/>
<dbReference type="KEGG" id="bja:blr2536"/>
<dbReference type="PATRIC" id="fig|224911.44.peg.2116"/>
<dbReference type="eggNOG" id="COG0751">
    <property type="taxonomic scope" value="Bacteria"/>
</dbReference>
<dbReference type="HOGENOM" id="CLU_007220_2_1_5"/>
<dbReference type="InParanoid" id="Q89S69"/>
<dbReference type="OrthoDB" id="9775440at2"/>
<dbReference type="PhylomeDB" id="Q89S69"/>
<dbReference type="Proteomes" id="UP000002526">
    <property type="component" value="Chromosome"/>
</dbReference>
<dbReference type="GO" id="GO:0005829">
    <property type="term" value="C:cytosol"/>
    <property type="evidence" value="ECO:0000318"/>
    <property type="project" value="GO_Central"/>
</dbReference>
<dbReference type="GO" id="GO:0004814">
    <property type="term" value="F:arginine-tRNA ligase activity"/>
    <property type="evidence" value="ECO:0007669"/>
    <property type="project" value="InterPro"/>
</dbReference>
<dbReference type="GO" id="GO:0005524">
    <property type="term" value="F:ATP binding"/>
    <property type="evidence" value="ECO:0007669"/>
    <property type="project" value="UniProtKB-UniRule"/>
</dbReference>
<dbReference type="GO" id="GO:0004820">
    <property type="term" value="F:glycine-tRNA ligase activity"/>
    <property type="evidence" value="ECO:0007669"/>
    <property type="project" value="UniProtKB-UniRule"/>
</dbReference>
<dbReference type="GO" id="GO:0006420">
    <property type="term" value="P:arginyl-tRNA aminoacylation"/>
    <property type="evidence" value="ECO:0007669"/>
    <property type="project" value="InterPro"/>
</dbReference>
<dbReference type="GO" id="GO:0006426">
    <property type="term" value="P:glycyl-tRNA aminoacylation"/>
    <property type="evidence" value="ECO:0007669"/>
    <property type="project" value="UniProtKB-UniRule"/>
</dbReference>
<dbReference type="HAMAP" id="MF_00255">
    <property type="entry name" value="Gly_tRNA_synth_beta"/>
    <property type="match status" value="1"/>
</dbReference>
<dbReference type="InterPro" id="IPR008909">
    <property type="entry name" value="DALR_anticod-bd"/>
</dbReference>
<dbReference type="InterPro" id="IPR015944">
    <property type="entry name" value="Gly-tRNA-synth_bsu"/>
</dbReference>
<dbReference type="InterPro" id="IPR006194">
    <property type="entry name" value="Gly-tRNA-synth_heterodimer"/>
</dbReference>
<dbReference type="NCBIfam" id="TIGR00211">
    <property type="entry name" value="glyS"/>
    <property type="match status" value="1"/>
</dbReference>
<dbReference type="PANTHER" id="PTHR30075:SF2">
    <property type="entry name" value="GLYCINE--TRNA LIGASE, CHLOROPLASTIC_MITOCHONDRIAL 2"/>
    <property type="match status" value="1"/>
</dbReference>
<dbReference type="PANTHER" id="PTHR30075">
    <property type="entry name" value="GLYCYL-TRNA SYNTHETASE"/>
    <property type="match status" value="1"/>
</dbReference>
<dbReference type="Pfam" id="PF05746">
    <property type="entry name" value="DALR_1"/>
    <property type="match status" value="1"/>
</dbReference>
<dbReference type="Pfam" id="PF02092">
    <property type="entry name" value="tRNA_synt_2f"/>
    <property type="match status" value="1"/>
</dbReference>
<dbReference type="PRINTS" id="PR01045">
    <property type="entry name" value="TRNASYNTHGB"/>
</dbReference>
<dbReference type="SUPFAM" id="SSF109604">
    <property type="entry name" value="HD-domain/PDEase-like"/>
    <property type="match status" value="1"/>
</dbReference>
<dbReference type="PROSITE" id="PS50861">
    <property type="entry name" value="AA_TRNA_LIGASE_II_GLYAB"/>
    <property type="match status" value="1"/>
</dbReference>
<proteinExistence type="inferred from homology"/>
<reference key="1">
    <citation type="journal article" date="2002" name="DNA Res.">
        <title>Complete genomic sequence of nitrogen-fixing symbiotic bacterium Bradyrhizobium japonicum USDA110.</title>
        <authorList>
            <person name="Kaneko T."/>
            <person name="Nakamura Y."/>
            <person name="Sato S."/>
            <person name="Minamisawa K."/>
            <person name="Uchiumi T."/>
            <person name="Sasamoto S."/>
            <person name="Watanabe A."/>
            <person name="Idesawa K."/>
            <person name="Iriguchi M."/>
            <person name="Kawashima K."/>
            <person name="Kohara M."/>
            <person name="Matsumoto M."/>
            <person name="Shimpo S."/>
            <person name="Tsuruoka H."/>
            <person name="Wada T."/>
            <person name="Yamada M."/>
            <person name="Tabata S."/>
        </authorList>
    </citation>
    <scope>NUCLEOTIDE SEQUENCE [LARGE SCALE GENOMIC DNA]</scope>
    <source>
        <strain>JCM 10833 / BCRC 13528 / IAM 13628 / NBRC 14792 / USDA 110</strain>
    </source>
</reference>
<comment type="catalytic activity">
    <reaction evidence="1">
        <text>tRNA(Gly) + glycine + ATP = glycyl-tRNA(Gly) + AMP + diphosphate</text>
        <dbReference type="Rhea" id="RHEA:16013"/>
        <dbReference type="Rhea" id="RHEA-COMP:9664"/>
        <dbReference type="Rhea" id="RHEA-COMP:9683"/>
        <dbReference type="ChEBI" id="CHEBI:30616"/>
        <dbReference type="ChEBI" id="CHEBI:33019"/>
        <dbReference type="ChEBI" id="CHEBI:57305"/>
        <dbReference type="ChEBI" id="CHEBI:78442"/>
        <dbReference type="ChEBI" id="CHEBI:78522"/>
        <dbReference type="ChEBI" id="CHEBI:456215"/>
        <dbReference type="EC" id="6.1.1.14"/>
    </reaction>
</comment>
<comment type="subunit">
    <text evidence="1">Tetramer of two alpha and two beta subunits.</text>
</comment>
<comment type="subcellular location">
    <subcellularLocation>
        <location evidence="1">Cytoplasm</location>
    </subcellularLocation>
</comment>
<comment type="similarity">
    <text evidence="1">Belongs to the class-II aminoacyl-tRNA synthetase family.</text>
</comment>
<gene>
    <name evidence="1" type="primary">glyS</name>
    <name type="ordered locus">blr2536</name>
</gene>
<evidence type="ECO:0000255" key="1">
    <source>
        <dbReference type="HAMAP-Rule" id="MF_00255"/>
    </source>
</evidence>
<accession>Q89S69</accession>